<reference key="1">
    <citation type="journal article" date="2001" name="Proc. Natl. Acad. Sci. U.S.A.">
        <title>The complete genome of the crenarchaeon Sulfolobus solfataricus P2.</title>
        <authorList>
            <person name="She Q."/>
            <person name="Singh R.K."/>
            <person name="Confalonieri F."/>
            <person name="Zivanovic Y."/>
            <person name="Allard G."/>
            <person name="Awayez M.J."/>
            <person name="Chan-Weiher C.C.-Y."/>
            <person name="Clausen I.G."/>
            <person name="Curtis B.A."/>
            <person name="De Moors A."/>
            <person name="Erauso G."/>
            <person name="Fletcher C."/>
            <person name="Gordon P.M.K."/>
            <person name="Heikamp-de Jong I."/>
            <person name="Jeffries A.C."/>
            <person name="Kozera C.J."/>
            <person name="Medina N."/>
            <person name="Peng X."/>
            <person name="Thi-Ngoc H.P."/>
            <person name="Redder P."/>
            <person name="Schenk M.E."/>
            <person name="Theriault C."/>
            <person name="Tolstrup N."/>
            <person name="Charlebois R.L."/>
            <person name="Doolittle W.F."/>
            <person name="Duguet M."/>
            <person name="Gaasterland T."/>
            <person name="Garrett R.A."/>
            <person name="Ragan M.A."/>
            <person name="Sensen C.W."/>
            <person name="Van der Oost J."/>
        </authorList>
    </citation>
    <scope>NUCLEOTIDE SEQUENCE [LARGE SCALE GENOMIC DNA]</scope>
    <source>
        <strain>ATCC 35092 / DSM 1617 / JCM 11322 / P2</strain>
    </source>
</reference>
<reference key="2">
    <citation type="journal article" date="2009" name="Nucleic Acids Res.">
        <title>Function and ribosomal localization of aIF6, a translational regulator shared by archaea and eukarya.</title>
        <authorList>
            <person name="Benelli D."/>
            <person name="Marzi S."/>
            <person name="Mancone C."/>
            <person name="Alonzi T."/>
            <person name="la Teana A."/>
            <person name="Londei P."/>
        </authorList>
    </citation>
    <scope>FUNCTION</scope>
    <scope>INTERACTION WITH L14 (RPL14P)</scope>
    <scope>SUBUNIT</scope>
    <scope>SUBCELLULAR LOCATION</scope>
    <scope>POSSIBLE POST-TRANSLATIONAL MODIFICATION</scope>
    <scope>INDUCTION</scope>
    <scope>RRNA-BINDING</scope>
</reference>
<accession>Q980G0</accession>
<sequence length="223" mass="24373">MNLQRLSVFGTDNIGVYIYTNNKYTIIPRGLDSETKENIAQVLGTELLEAEISRSFLLGIFISGNDNGILLPKSTIDDEFRFLKENLRDCRVEILNSKVTALGNTILANNKAALIYPEFNDIEEKIIKETLGVEDIKRGKIAQMITVGSVGVITNKGGLVHVDTSEKELKELEKLFGVKIDIGTVNFGSVFIKSGLVANDKGTLVGASTTGPEILRIQKALGE</sequence>
<gene>
    <name evidence="1" type="primary">eif6</name>
    <name type="ordered locus">SSO0351</name>
</gene>
<name>IF6_SACS2</name>
<keyword id="KW-0396">Initiation factor</keyword>
<keyword id="KW-0648">Protein biosynthesis</keyword>
<keyword id="KW-1185">Reference proteome</keyword>
<keyword id="KW-0694">RNA-binding</keyword>
<keyword id="KW-0699">rRNA-binding</keyword>
<keyword id="KW-0346">Stress response</keyword>
<feature type="chain" id="PRO_0000153759" description="Translation initiation factor 6">
    <location>
        <begin position="1"/>
        <end position="223"/>
    </location>
</feature>
<organism>
    <name type="scientific">Saccharolobus solfataricus (strain ATCC 35092 / DSM 1617 / JCM 11322 / P2)</name>
    <name type="common">Sulfolobus solfataricus</name>
    <dbReference type="NCBI Taxonomy" id="273057"/>
    <lineage>
        <taxon>Archaea</taxon>
        <taxon>Thermoproteota</taxon>
        <taxon>Thermoprotei</taxon>
        <taxon>Sulfolobales</taxon>
        <taxon>Sulfolobaceae</taxon>
        <taxon>Saccharolobus</taxon>
    </lineage>
</organism>
<proteinExistence type="evidence at protein level"/>
<comment type="function">
    <text evidence="1 2">Binds to the 50S ribosomal subunit and prevents its association with the 30S ribosomal subunit to form the 70S initiation complex. Inhibits translation of both leadered and leaderless mRNAs, maybe by binding to the 50S ribosome subunit, preventing it from binding to the 30S subunit.</text>
</comment>
<comment type="subunit">
    <text evidence="2">Associates with the 50S ribosomal subunit, specifically with protein L14. Binds to 23S rRNA, possibly between where the 30S and 50S subunits associate to initiate translation.</text>
</comment>
<comment type="induction">
    <text evidence="2">Constitutively expressed, further induced by cold (60) or heat (90 degrees Celsius) shock (at protein level).</text>
</comment>
<comment type="PTM">
    <text>Modified in an unknown fashion (not phosphorylation) following release from 50S ribosomal subunits.</text>
</comment>
<comment type="similarity">
    <text evidence="1">Belongs to the eIF-6 family.</text>
</comment>
<evidence type="ECO:0000255" key="1">
    <source>
        <dbReference type="HAMAP-Rule" id="MF_00032"/>
    </source>
</evidence>
<evidence type="ECO:0000269" key="2">
    <source>
    </source>
</evidence>
<dbReference type="EMBL" id="AE006641">
    <property type="protein sequence ID" value="AAK40681.1"/>
    <property type="molecule type" value="Genomic_DNA"/>
</dbReference>
<dbReference type="PIR" id="B90178">
    <property type="entry name" value="B90178"/>
</dbReference>
<dbReference type="RefSeq" id="WP_009990645.1">
    <property type="nucleotide sequence ID" value="NC_002754.1"/>
</dbReference>
<dbReference type="SMR" id="Q980G0"/>
<dbReference type="FunCoup" id="Q980G0">
    <property type="interactions" value="230"/>
</dbReference>
<dbReference type="STRING" id="273057.SSO0351"/>
<dbReference type="PaxDb" id="273057-SSO0351"/>
<dbReference type="EnsemblBacteria" id="AAK40681">
    <property type="protein sequence ID" value="AAK40681"/>
    <property type="gene ID" value="SSO0351"/>
</dbReference>
<dbReference type="KEGG" id="sso:SSO0351"/>
<dbReference type="PATRIC" id="fig|273057.12.peg.342"/>
<dbReference type="eggNOG" id="arCOG04176">
    <property type="taxonomic scope" value="Archaea"/>
</dbReference>
<dbReference type="HOGENOM" id="CLU_071894_1_0_2"/>
<dbReference type="InParanoid" id="Q980G0"/>
<dbReference type="PhylomeDB" id="Q980G0"/>
<dbReference type="Proteomes" id="UP000001974">
    <property type="component" value="Chromosome"/>
</dbReference>
<dbReference type="GO" id="GO:0005829">
    <property type="term" value="C:cytosol"/>
    <property type="evidence" value="ECO:0000318"/>
    <property type="project" value="GO_Central"/>
</dbReference>
<dbReference type="GO" id="GO:0043022">
    <property type="term" value="F:ribosome binding"/>
    <property type="evidence" value="ECO:0007669"/>
    <property type="project" value="InterPro"/>
</dbReference>
<dbReference type="GO" id="GO:0019843">
    <property type="term" value="F:rRNA binding"/>
    <property type="evidence" value="ECO:0007669"/>
    <property type="project" value="UniProtKB-KW"/>
</dbReference>
<dbReference type="GO" id="GO:0003743">
    <property type="term" value="F:translation initiation factor activity"/>
    <property type="evidence" value="ECO:0007669"/>
    <property type="project" value="UniProtKB-UniRule"/>
</dbReference>
<dbReference type="GO" id="GO:1902626">
    <property type="term" value="P:assembly of large subunit precursor of preribosome"/>
    <property type="evidence" value="ECO:0000318"/>
    <property type="project" value="GO_Central"/>
</dbReference>
<dbReference type="GO" id="GO:0042256">
    <property type="term" value="P:cytosolic ribosome assembly"/>
    <property type="evidence" value="ECO:0007669"/>
    <property type="project" value="InterPro"/>
</dbReference>
<dbReference type="GO" id="GO:0000460">
    <property type="term" value="P:maturation of 5.8S rRNA"/>
    <property type="evidence" value="ECO:0000318"/>
    <property type="project" value="GO_Central"/>
</dbReference>
<dbReference type="GO" id="GO:0000470">
    <property type="term" value="P:maturation of LSU-rRNA"/>
    <property type="evidence" value="ECO:0000318"/>
    <property type="project" value="GO_Central"/>
</dbReference>
<dbReference type="FunFam" id="3.75.10.10:FF:000011">
    <property type="entry name" value="Translation initiation factor 6"/>
    <property type="match status" value="1"/>
</dbReference>
<dbReference type="Gene3D" id="3.75.10.10">
    <property type="entry name" value="L-arginine/glycine Amidinotransferase, Chain A"/>
    <property type="match status" value="1"/>
</dbReference>
<dbReference type="HAMAP" id="MF_00032">
    <property type="entry name" value="eIF_6"/>
    <property type="match status" value="1"/>
</dbReference>
<dbReference type="InterPro" id="IPR002769">
    <property type="entry name" value="eIF6"/>
</dbReference>
<dbReference type="NCBIfam" id="TIGR00323">
    <property type="entry name" value="eIF-6"/>
    <property type="match status" value="1"/>
</dbReference>
<dbReference type="NCBIfam" id="NF003126">
    <property type="entry name" value="PRK04046.1-1"/>
    <property type="match status" value="1"/>
</dbReference>
<dbReference type="PANTHER" id="PTHR10784">
    <property type="entry name" value="TRANSLATION INITIATION FACTOR 6"/>
    <property type="match status" value="1"/>
</dbReference>
<dbReference type="Pfam" id="PF01912">
    <property type="entry name" value="eIF-6"/>
    <property type="match status" value="1"/>
</dbReference>
<dbReference type="PIRSF" id="PIRSF006413">
    <property type="entry name" value="IF-6"/>
    <property type="match status" value="1"/>
</dbReference>
<dbReference type="SMART" id="SM00654">
    <property type="entry name" value="eIF6"/>
    <property type="match status" value="1"/>
</dbReference>
<dbReference type="SUPFAM" id="SSF55909">
    <property type="entry name" value="Pentein"/>
    <property type="match status" value="1"/>
</dbReference>
<protein>
    <recommendedName>
        <fullName evidence="1">Translation initiation factor 6</fullName>
        <shortName evidence="1">aIF-6</shortName>
    </recommendedName>
</protein>